<sequence>MSADIRFDSLKTIVPAVSRETADRLIAFEDLFRKWSKAINLASPSTLADLWNRHILDSAQLFPLAKEATRWLDIGSGGGFPGIVTACFLAERSGGCIDLVESAGKKAAFLRTAAGHLHVPARVHSARIESMWEKIETPQVVTARALASLGDLFTLAEPWLSDGAKALFQKGRDYQREIDESRVGWSFDLVKHPSAIDQASVILEISNLRRKTD</sequence>
<evidence type="ECO:0000255" key="1">
    <source>
        <dbReference type="HAMAP-Rule" id="MF_00074"/>
    </source>
</evidence>
<dbReference type="EC" id="2.1.1.170" evidence="1"/>
<dbReference type="EMBL" id="CP001488">
    <property type="protein sequence ID" value="ACO01770.1"/>
    <property type="molecule type" value="Genomic_DNA"/>
</dbReference>
<dbReference type="RefSeq" id="WP_002967027.1">
    <property type="nucleotide sequence ID" value="NC_012441.1"/>
</dbReference>
<dbReference type="SMR" id="C0RFU8"/>
<dbReference type="GeneID" id="97534679"/>
<dbReference type="KEGG" id="bmi:BMEA_A2121"/>
<dbReference type="HOGENOM" id="CLU_065341_1_1_5"/>
<dbReference type="Proteomes" id="UP000001748">
    <property type="component" value="Chromosome I"/>
</dbReference>
<dbReference type="GO" id="GO:0005829">
    <property type="term" value="C:cytosol"/>
    <property type="evidence" value="ECO:0007669"/>
    <property type="project" value="TreeGrafter"/>
</dbReference>
<dbReference type="GO" id="GO:0070043">
    <property type="term" value="F:rRNA (guanine-N7-)-methyltransferase activity"/>
    <property type="evidence" value="ECO:0007669"/>
    <property type="project" value="UniProtKB-UniRule"/>
</dbReference>
<dbReference type="Gene3D" id="3.40.50.150">
    <property type="entry name" value="Vaccinia Virus protein VP39"/>
    <property type="match status" value="1"/>
</dbReference>
<dbReference type="HAMAP" id="MF_00074">
    <property type="entry name" value="16SrRNA_methyltr_G"/>
    <property type="match status" value="1"/>
</dbReference>
<dbReference type="InterPro" id="IPR003682">
    <property type="entry name" value="rRNA_ssu_MeTfrase_G"/>
</dbReference>
<dbReference type="InterPro" id="IPR029063">
    <property type="entry name" value="SAM-dependent_MTases_sf"/>
</dbReference>
<dbReference type="NCBIfam" id="TIGR00138">
    <property type="entry name" value="rsmG_gidB"/>
    <property type="match status" value="1"/>
</dbReference>
<dbReference type="PANTHER" id="PTHR31760">
    <property type="entry name" value="S-ADENOSYL-L-METHIONINE-DEPENDENT METHYLTRANSFERASES SUPERFAMILY PROTEIN"/>
    <property type="match status" value="1"/>
</dbReference>
<dbReference type="PANTHER" id="PTHR31760:SF0">
    <property type="entry name" value="S-ADENOSYL-L-METHIONINE-DEPENDENT METHYLTRANSFERASES SUPERFAMILY PROTEIN"/>
    <property type="match status" value="1"/>
</dbReference>
<dbReference type="Pfam" id="PF02527">
    <property type="entry name" value="GidB"/>
    <property type="match status" value="1"/>
</dbReference>
<dbReference type="PIRSF" id="PIRSF003078">
    <property type="entry name" value="GidB"/>
    <property type="match status" value="1"/>
</dbReference>
<dbReference type="SUPFAM" id="SSF53335">
    <property type="entry name" value="S-adenosyl-L-methionine-dependent methyltransferases"/>
    <property type="match status" value="1"/>
</dbReference>
<organism>
    <name type="scientific">Brucella melitensis biotype 2 (strain ATCC 23457)</name>
    <dbReference type="NCBI Taxonomy" id="546272"/>
    <lineage>
        <taxon>Bacteria</taxon>
        <taxon>Pseudomonadati</taxon>
        <taxon>Pseudomonadota</taxon>
        <taxon>Alphaproteobacteria</taxon>
        <taxon>Hyphomicrobiales</taxon>
        <taxon>Brucellaceae</taxon>
        <taxon>Brucella/Ochrobactrum group</taxon>
        <taxon>Brucella</taxon>
    </lineage>
</organism>
<gene>
    <name evidence="1" type="primary">rsmG</name>
    <name type="ordered locus">BMEA_A2121</name>
</gene>
<comment type="function">
    <text evidence="1">Specifically methylates the N7 position of guanine in position 527 of 16S rRNA.</text>
</comment>
<comment type="catalytic activity">
    <reaction evidence="1">
        <text>guanosine(527) in 16S rRNA + S-adenosyl-L-methionine = N(7)-methylguanosine(527) in 16S rRNA + S-adenosyl-L-homocysteine</text>
        <dbReference type="Rhea" id="RHEA:42732"/>
        <dbReference type="Rhea" id="RHEA-COMP:10209"/>
        <dbReference type="Rhea" id="RHEA-COMP:10210"/>
        <dbReference type="ChEBI" id="CHEBI:57856"/>
        <dbReference type="ChEBI" id="CHEBI:59789"/>
        <dbReference type="ChEBI" id="CHEBI:74269"/>
        <dbReference type="ChEBI" id="CHEBI:74480"/>
        <dbReference type="EC" id="2.1.1.170"/>
    </reaction>
</comment>
<comment type="subcellular location">
    <subcellularLocation>
        <location evidence="1">Cytoplasm</location>
    </subcellularLocation>
</comment>
<comment type="similarity">
    <text evidence="1">Belongs to the methyltransferase superfamily. RNA methyltransferase RsmG family.</text>
</comment>
<name>RSMG_BRUMB</name>
<reference key="1">
    <citation type="submission" date="2009-03" db="EMBL/GenBank/DDBJ databases">
        <title>Brucella melitensis ATCC 23457 whole genome shotgun sequencing project.</title>
        <authorList>
            <person name="Setubal J.C."/>
            <person name="Boyle S."/>
            <person name="Crasta O.R."/>
            <person name="Gillespie J.J."/>
            <person name="Kenyon R.W."/>
            <person name="Lu J."/>
            <person name="Mane S."/>
            <person name="Nagrani S."/>
            <person name="Shallom J.M."/>
            <person name="Shallom S."/>
            <person name="Shukla M."/>
            <person name="Snyder E.E."/>
            <person name="Sobral B.W."/>
            <person name="Wattam A.R."/>
            <person name="Will R."/>
            <person name="Williams K."/>
            <person name="Yoo H."/>
            <person name="Munk C."/>
            <person name="Tapia R."/>
            <person name="Han C."/>
            <person name="Detter J.C."/>
            <person name="Bruce D."/>
            <person name="Brettin T.S."/>
        </authorList>
    </citation>
    <scope>NUCLEOTIDE SEQUENCE [LARGE SCALE GENOMIC DNA]</scope>
    <source>
        <strain>ATCC 23457</strain>
    </source>
</reference>
<keyword id="KW-0963">Cytoplasm</keyword>
<keyword id="KW-0489">Methyltransferase</keyword>
<keyword id="KW-0698">rRNA processing</keyword>
<keyword id="KW-0949">S-adenosyl-L-methionine</keyword>
<keyword id="KW-0808">Transferase</keyword>
<proteinExistence type="inferred from homology"/>
<feature type="chain" id="PRO_1000118181" description="Ribosomal RNA small subunit methyltransferase G">
    <location>
        <begin position="1"/>
        <end position="213"/>
    </location>
</feature>
<feature type="binding site" evidence="1">
    <location>
        <position position="75"/>
    </location>
    <ligand>
        <name>S-adenosyl-L-methionine</name>
        <dbReference type="ChEBI" id="CHEBI:59789"/>
    </ligand>
</feature>
<feature type="binding site" evidence="1">
    <location>
        <position position="80"/>
    </location>
    <ligand>
        <name>S-adenosyl-L-methionine</name>
        <dbReference type="ChEBI" id="CHEBI:59789"/>
    </ligand>
</feature>
<feature type="binding site" evidence="1">
    <location>
        <begin position="128"/>
        <end position="129"/>
    </location>
    <ligand>
        <name>S-adenosyl-L-methionine</name>
        <dbReference type="ChEBI" id="CHEBI:59789"/>
    </ligand>
</feature>
<feature type="binding site" evidence="1">
    <location>
        <position position="144"/>
    </location>
    <ligand>
        <name>S-adenosyl-L-methionine</name>
        <dbReference type="ChEBI" id="CHEBI:59789"/>
    </ligand>
</feature>
<protein>
    <recommendedName>
        <fullName evidence="1">Ribosomal RNA small subunit methyltransferase G</fullName>
        <ecNumber evidence="1">2.1.1.170</ecNumber>
    </recommendedName>
    <alternativeName>
        <fullName evidence="1">16S rRNA 7-methylguanosine methyltransferase</fullName>
        <shortName evidence="1">16S rRNA m7G methyltransferase</shortName>
    </alternativeName>
</protein>
<accession>C0RFU8</accession>